<dbReference type="EMBL" id="Y14082">
    <property type="protein sequence ID" value="CAA74495.1"/>
    <property type="molecule type" value="Genomic_DNA"/>
</dbReference>
<dbReference type="EMBL" id="AL009126">
    <property type="protein sequence ID" value="CAB12789.1"/>
    <property type="molecule type" value="Genomic_DNA"/>
</dbReference>
<dbReference type="PIR" id="A69826">
    <property type="entry name" value="A69826"/>
</dbReference>
<dbReference type="RefSeq" id="WP_003233341.1">
    <property type="nucleotide sequence ID" value="NZ_OZ025638.1"/>
</dbReference>
<dbReference type="SMR" id="O07580"/>
<dbReference type="FunCoup" id="O07580">
    <property type="interactions" value="29"/>
</dbReference>
<dbReference type="IntAct" id="O07580">
    <property type="interactions" value="1"/>
</dbReference>
<dbReference type="STRING" id="224308.BSU09500"/>
<dbReference type="PaxDb" id="224308-BSU09500"/>
<dbReference type="EnsemblBacteria" id="CAB12789">
    <property type="protein sequence ID" value="CAB12789"/>
    <property type="gene ID" value="BSU_09500"/>
</dbReference>
<dbReference type="GeneID" id="936268"/>
<dbReference type="KEGG" id="bsu:BSU09500"/>
<dbReference type="PATRIC" id="fig|224308.179.peg.1023"/>
<dbReference type="eggNOG" id="ENOG5030CR2">
    <property type="taxonomic scope" value="Bacteria"/>
</dbReference>
<dbReference type="InParanoid" id="O07580"/>
<dbReference type="OrthoDB" id="2931023at2"/>
<dbReference type="BioCyc" id="BSUB:BSU09500-MONOMER"/>
<dbReference type="Proteomes" id="UP000001570">
    <property type="component" value="Chromosome"/>
</dbReference>
<dbReference type="GO" id="GO:0005886">
    <property type="term" value="C:plasma membrane"/>
    <property type="evidence" value="ECO:0007669"/>
    <property type="project" value="UniProtKB-SubCell"/>
</dbReference>
<dbReference type="InterPro" id="IPR020496">
    <property type="entry name" value="YhdK"/>
</dbReference>
<dbReference type="Pfam" id="PF17453">
    <property type="entry name" value="Sigma_M_inh"/>
    <property type="match status" value="1"/>
</dbReference>
<protein>
    <recommendedName>
        <fullName>Probable anti-sigma-M factor YhdK</fullName>
    </recommendedName>
</protein>
<comment type="subunit">
    <text evidence="2">Interacts specifically with YhdL, while the N-terminus of YhdL interacts with sigma-M.</text>
</comment>
<comment type="interaction">
    <interactant intactId="EBI-2122277">
        <id>O07580</id>
    </interactant>
    <interactant intactId="EBI-2122262">
        <id>O07581</id>
        <label>yhdL</label>
    </interactant>
    <organismsDiffer>false</organismsDiffer>
    <experiments>4</experiments>
</comment>
<comment type="subcellular location">
    <subcellularLocation>
        <location evidence="3">Cell membrane</location>
        <topology evidence="3">Multi-pass membrane protein</topology>
    </subcellularLocation>
</comment>
<comment type="induction">
    <text>Cotranscribed with sigma-M and yhdL. YhdK and YhdL negatively regulate sigma-M.</text>
</comment>
<evidence type="ECO:0000255" key="1"/>
<evidence type="ECO:0000269" key="2">
    <source>
    </source>
</evidence>
<evidence type="ECO:0000305" key="3"/>
<feature type="chain" id="PRO_0000049569" description="Probable anti-sigma-M factor YhdK">
    <location>
        <begin position="1"/>
        <end position="96"/>
    </location>
</feature>
<feature type="transmembrane region" description="Helical" evidence="1">
    <location>
        <begin position="12"/>
        <end position="34"/>
    </location>
</feature>
<feature type="transmembrane region" description="Helical" evidence="1">
    <location>
        <begin position="38"/>
        <end position="60"/>
    </location>
</feature>
<feature type="transmembrane region" description="Helical" evidence="1">
    <location>
        <begin position="67"/>
        <end position="86"/>
    </location>
</feature>
<proteinExistence type="evidence at protein level"/>
<keyword id="KW-1003">Cell membrane</keyword>
<keyword id="KW-0472">Membrane</keyword>
<keyword id="KW-1185">Reference proteome</keyword>
<keyword id="KW-0678">Repressor</keyword>
<keyword id="KW-0804">Transcription</keyword>
<keyword id="KW-0805">Transcription regulation</keyword>
<keyword id="KW-0812">Transmembrane</keyword>
<keyword id="KW-1133">Transmembrane helix</keyword>
<name>YHDK_BACSU</name>
<accession>O07580</accession>
<organism>
    <name type="scientific">Bacillus subtilis (strain 168)</name>
    <dbReference type="NCBI Taxonomy" id="224308"/>
    <lineage>
        <taxon>Bacteria</taxon>
        <taxon>Bacillati</taxon>
        <taxon>Bacillota</taxon>
        <taxon>Bacilli</taxon>
        <taxon>Bacillales</taxon>
        <taxon>Bacillaceae</taxon>
        <taxon>Bacillus</taxon>
    </lineage>
</organism>
<sequence>MELVRIFKEHNVFGWISVGTAVLSLLLLNLAIISNVTFYSYQMLPFAMAAVPFGVVELFIKRGRTGPGLLGVILNLFVIICVYTIVSVDTNLQFGF</sequence>
<reference key="1">
    <citation type="journal article" date="1998" name="Microbiology">
        <title>The 172 kb prkA-addAB region from 83 degrees to 97 degrees of the Bacillus subtilis chromosome contains several dysfunctional genes, the glyB marker, many genes encoding transporter proteins, and the ubiquitous hit gene.</title>
        <authorList>
            <person name="Noback M.A."/>
            <person name="Holsappel S."/>
            <person name="Kiewiet R."/>
            <person name="Terpstra P."/>
            <person name="Wambutt R."/>
            <person name="Wedler H."/>
            <person name="Venema G."/>
            <person name="Bron S."/>
        </authorList>
    </citation>
    <scope>NUCLEOTIDE SEQUENCE [GENOMIC DNA]</scope>
    <source>
        <strain>168</strain>
    </source>
</reference>
<reference key="2">
    <citation type="journal article" date="1997" name="Nature">
        <title>The complete genome sequence of the Gram-positive bacterium Bacillus subtilis.</title>
        <authorList>
            <person name="Kunst F."/>
            <person name="Ogasawara N."/>
            <person name="Moszer I."/>
            <person name="Albertini A.M."/>
            <person name="Alloni G."/>
            <person name="Azevedo V."/>
            <person name="Bertero M.G."/>
            <person name="Bessieres P."/>
            <person name="Bolotin A."/>
            <person name="Borchert S."/>
            <person name="Borriss R."/>
            <person name="Boursier L."/>
            <person name="Brans A."/>
            <person name="Braun M."/>
            <person name="Brignell S.C."/>
            <person name="Bron S."/>
            <person name="Brouillet S."/>
            <person name="Bruschi C.V."/>
            <person name="Caldwell B."/>
            <person name="Capuano V."/>
            <person name="Carter N.M."/>
            <person name="Choi S.-K."/>
            <person name="Codani J.-J."/>
            <person name="Connerton I.F."/>
            <person name="Cummings N.J."/>
            <person name="Daniel R.A."/>
            <person name="Denizot F."/>
            <person name="Devine K.M."/>
            <person name="Duesterhoeft A."/>
            <person name="Ehrlich S.D."/>
            <person name="Emmerson P.T."/>
            <person name="Entian K.-D."/>
            <person name="Errington J."/>
            <person name="Fabret C."/>
            <person name="Ferrari E."/>
            <person name="Foulger D."/>
            <person name="Fritz C."/>
            <person name="Fujita M."/>
            <person name="Fujita Y."/>
            <person name="Fuma S."/>
            <person name="Galizzi A."/>
            <person name="Galleron N."/>
            <person name="Ghim S.-Y."/>
            <person name="Glaser P."/>
            <person name="Goffeau A."/>
            <person name="Golightly E.J."/>
            <person name="Grandi G."/>
            <person name="Guiseppi G."/>
            <person name="Guy B.J."/>
            <person name="Haga K."/>
            <person name="Haiech J."/>
            <person name="Harwood C.R."/>
            <person name="Henaut A."/>
            <person name="Hilbert H."/>
            <person name="Holsappel S."/>
            <person name="Hosono S."/>
            <person name="Hullo M.-F."/>
            <person name="Itaya M."/>
            <person name="Jones L.-M."/>
            <person name="Joris B."/>
            <person name="Karamata D."/>
            <person name="Kasahara Y."/>
            <person name="Klaerr-Blanchard M."/>
            <person name="Klein C."/>
            <person name="Kobayashi Y."/>
            <person name="Koetter P."/>
            <person name="Koningstein G."/>
            <person name="Krogh S."/>
            <person name="Kumano M."/>
            <person name="Kurita K."/>
            <person name="Lapidus A."/>
            <person name="Lardinois S."/>
            <person name="Lauber J."/>
            <person name="Lazarevic V."/>
            <person name="Lee S.-M."/>
            <person name="Levine A."/>
            <person name="Liu H."/>
            <person name="Masuda S."/>
            <person name="Mauel C."/>
            <person name="Medigue C."/>
            <person name="Medina N."/>
            <person name="Mellado R.P."/>
            <person name="Mizuno M."/>
            <person name="Moestl D."/>
            <person name="Nakai S."/>
            <person name="Noback M."/>
            <person name="Noone D."/>
            <person name="O'Reilly M."/>
            <person name="Ogawa K."/>
            <person name="Ogiwara A."/>
            <person name="Oudega B."/>
            <person name="Park S.-H."/>
            <person name="Parro V."/>
            <person name="Pohl T.M."/>
            <person name="Portetelle D."/>
            <person name="Porwollik S."/>
            <person name="Prescott A.M."/>
            <person name="Presecan E."/>
            <person name="Pujic P."/>
            <person name="Purnelle B."/>
            <person name="Rapoport G."/>
            <person name="Rey M."/>
            <person name="Reynolds S."/>
            <person name="Rieger M."/>
            <person name="Rivolta C."/>
            <person name="Rocha E."/>
            <person name="Roche B."/>
            <person name="Rose M."/>
            <person name="Sadaie Y."/>
            <person name="Sato T."/>
            <person name="Scanlan E."/>
            <person name="Schleich S."/>
            <person name="Schroeter R."/>
            <person name="Scoffone F."/>
            <person name="Sekiguchi J."/>
            <person name="Sekowska A."/>
            <person name="Seror S.J."/>
            <person name="Serror P."/>
            <person name="Shin B.-S."/>
            <person name="Soldo B."/>
            <person name="Sorokin A."/>
            <person name="Tacconi E."/>
            <person name="Takagi T."/>
            <person name="Takahashi H."/>
            <person name="Takemaru K."/>
            <person name="Takeuchi M."/>
            <person name="Tamakoshi A."/>
            <person name="Tanaka T."/>
            <person name="Terpstra P."/>
            <person name="Tognoni A."/>
            <person name="Tosato V."/>
            <person name="Uchiyama S."/>
            <person name="Vandenbol M."/>
            <person name="Vannier F."/>
            <person name="Vassarotti A."/>
            <person name="Viari A."/>
            <person name="Wambutt R."/>
            <person name="Wedler E."/>
            <person name="Wedler H."/>
            <person name="Weitzenegger T."/>
            <person name="Winters P."/>
            <person name="Wipat A."/>
            <person name="Yamamoto H."/>
            <person name="Yamane K."/>
            <person name="Yasumoto K."/>
            <person name="Yata K."/>
            <person name="Yoshida K."/>
            <person name="Yoshikawa H.-F."/>
            <person name="Zumstein E."/>
            <person name="Yoshikawa H."/>
            <person name="Danchin A."/>
        </authorList>
    </citation>
    <scope>NUCLEOTIDE SEQUENCE [LARGE SCALE GENOMIC DNA]</scope>
    <source>
        <strain>168</strain>
    </source>
</reference>
<reference key="3">
    <citation type="journal article" date="1999" name="Mol. Microbiol.">
        <title>Sigma M, an ECF RNA polymerase sigma factor of Bacillus subtilis 168, is essential for growth and survival in high concentrations of salt.</title>
        <authorList>
            <person name="Horsburgh M.J."/>
            <person name="Moir A."/>
        </authorList>
    </citation>
    <scope>TRANSCRIPTION</scope>
    <source>
        <strain>168</strain>
    </source>
</reference>
<reference key="4">
    <citation type="journal article" date="2004" name="Microbiology">
        <title>Interaction of Bacillus subtilis extracytoplasmic function (ECF) sigma factors with the N-terminal regions of their potential anti-sigma factors.</title>
        <authorList>
            <person name="Yoshimura M."/>
            <person name="Asai K."/>
            <person name="Sadaie Y."/>
            <person name="Yoshikawa H."/>
        </authorList>
    </citation>
    <scope>INTERACTION OF YHDL WITH YHDK</scope>
</reference>
<gene>
    <name type="primary">yhdK</name>
    <name type="ordered locus">BSU09500</name>
</gene>